<feature type="chain" id="PRO_0000323873" description="Uridylate kinase">
    <location>
        <begin position="1"/>
        <end position="247"/>
    </location>
</feature>
<feature type="binding site" evidence="1">
    <location>
        <begin position="17"/>
        <end position="20"/>
    </location>
    <ligand>
        <name>ATP</name>
        <dbReference type="ChEBI" id="CHEBI:30616"/>
    </ligand>
</feature>
<feature type="binding site" evidence="1">
    <location>
        <position position="59"/>
    </location>
    <ligand>
        <name>UMP</name>
        <dbReference type="ChEBI" id="CHEBI:57865"/>
    </ligand>
</feature>
<feature type="binding site" evidence="1">
    <location>
        <position position="60"/>
    </location>
    <ligand>
        <name>ATP</name>
        <dbReference type="ChEBI" id="CHEBI:30616"/>
    </ligand>
</feature>
<feature type="binding site" evidence="1">
    <location>
        <position position="64"/>
    </location>
    <ligand>
        <name>ATP</name>
        <dbReference type="ChEBI" id="CHEBI:30616"/>
    </ligand>
</feature>
<feature type="binding site" evidence="1">
    <location>
        <position position="79"/>
    </location>
    <ligand>
        <name>UMP</name>
        <dbReference type="ChEBI" id="CHEBI:57865"/>
    </ligand>
</feature>
<feature type="binding site" evidence="1">
    <location>
        <begin position="140"/>
        <end position="147"/>
    </location>
    <ligand>
        <name>UMP</name>
        <dbReference type="ChEBI" id="CHEBI:57865"/>
    </ligand>
</feature>
<feature type="binding site" evidence="1">
    <location>
        <position position="167"/>
    </location>
    <ligand>
        <name>ATP</name>
        <dbReference type="ChEBI" id="CHEBI:30616"/>
    </ligand>
</feature>
<feature type="binding site" evidence="1">
    <location>
        <position position="173"/>
    </location>
    <ligand>
        <name>ATP</name>
        <dbReference type="ChEBI" id="CHEBI:30616"/>
    </ligand>
</feature>
<feature type="binding site" evidence="1">
    <location>
        <position position="176"/>
    </location>
    <ligand>
        <name>ATP</name>
        <dbReference type="ChEBI" id="CHEBI:30616"/>
    </ligand>
</feature>
<organism>
    <name type="scientific">Legionella pneumophila subsp. pneumophila (strain Philadelphia 1 / ATCC 33152 / DSM 7513)</name>
    <dbReference type="NCBI Taxonomy" id="272624"/>
    <lineage>
        <taxon>Bacteria</taxon>
        <taxon>Pseudomonadati</taxon>
        <taxon>Pseudomonadota</taxon>
        <taxon>Gammaproteobacteria</taxon>
        <taxon>Legionellales</taxon>
        <taxon>Legionellaceae</taxon>
        <taxon>Legionella</taxon>
    </lineage>
</organism>
<sequence length="247" mass="26660">MMNESQPKLKYKRILLKFSGEALMGKSQFGIDPSVLDSLARDIAELIHMGVEVGLVLGGGNLFRGKALSQAGVGRVTGDHMGMLATVMNALALRDALERIDLPARIMSAIPMLGVVDPYHRRKAITHLRNGQVVIFAAGTGNPFFTTDTAACLRAIEIGADIVLKATKVDGVYSADPLKNSDAKRYDYLTYKEVLTKGLEVMDSTAICLCQDQGMPLQVFDMAAPKALKRIVTGERVGTIVGANHDQ</sequence>
<protein>
    <recommendedName>
        <fullName evidence="1">Uridylate kinase</fullName>
        <shortName evidence="1">UK</shortName>
        <ecNumber evidence="1">2.7.4.22</ecNumber>
    </recommendedName>
    <alternativeName>
        <fullName evidence="1">Uridine monophosphate kinase</fullName>
        <shortName evidence="1">UMP kinase</shortName>
        <shortName evidence="1">UMPK</shortName>
    </alternativeName>
</protein>
<proteinExistence type="inferred from homology"/>
<evidence type="ECO:0000255" key="1">
    <source>
        <dbReference type="HAMAP-Rule" id="MF_01220"/>
    </source>
</evidence>
<reference key="1">
    <citation type="journal article" date="2004" name="Science">
        <title>The genomic sequence of the accidental pathogen Legionella pneumophila.</title>
        <authorList>
            <person name="Chien M."/>
            <person name="Morozova I."/>
            <person name="Shi S."/>
            <person name="Sheng H."/>
            <person name="Chen J."/>
            <person name="Gomez S.M."/>
            <person name="Asamani G."/>
            <person name="Hill K."/>
            <person name="Nuara J."/>
            <person name="Feder M."/>
            <person name="Rineer J."/>
            <person name="Greenberg J.J."/>
            <person name="Steshenko V."/>
            <person name="Park S.H."/>
            <person name="Zhao B."/>
            <person name="Teplitskaya E."/>
            <person name="Edwards J.R."/>
            <person name="Pampou S."/>
            <person name="Georghiou A."/>
            <person name="Chou I.-C."/>
            <person name="Iannuccilli W."/>
            <person name="Ulz M.E."/>
            <person name="Kim D.H."/>
            <person name="Geringer-Sameth A."/>
            <person name="Goldsberry C."/>
            <person name="Morozov P."/>
            <person name="Fischer S.G."/>
            <person name="Segal G."/>
            <person name="Qu X."/>
            <person name="Rzhetsky A."/>
            <person name="Zhang P."/>
            <person name="Cayanis E."/>
            <person name="De Jong P.J."/>
            <person name="Ju J."/>
            <person name="Kalachikov S."/>
            <person name="Shuman H.A."/>
            <person name="Russo J.J."/>
        </authorList>
    </citation>
    <scope>NUCLEOTIDE SEQUENCE [LARGE SCALE GENOMIC DNA]</scope>
    <source>
        <strain>Philadelphia 1 / ATCC 33152 / DSM 7513</strain>
    </source>
</reference>
<dbReference type="EC" id="2.7.4.22" evidence="1"/>
<dbReference type="EMBL" id="AE017354">
    <property type="protein sequence ID" value="AAU27792.1"/>
    <property type="molecule type" value="Genomic_DNA"/>
</dbReference>
<dbReference type="RefSeq" id="WP_010947439.1">
    <property type="nucleotide sequence ID" value="NC_002942.5"/>
</dbReference>
<dbReference type="RefSeq" id="YP_095739.1">
    <property type="nucleotide sequence ID" value="NC_002942.5"/>
</dbReference>
<dbReference type="SMR" id="Q5ZUT0"/>
<dbReference type="STRING" id="272624.lpg1712"/>
<dbReference type="PaxDb" id="272624-lpg1712"/>
<dbReference type="GeneID" id="57035701"/>
<dbReference type="KEGG" id="lpn:lpg1712"/>
<dbReference type="PATRIC" id="fig|272624.6.peg.1793"/>
<dbReference type="eggNOG" id="COG0528">
    <property type="taxonomic scope" value="Bacteria"/>
</dbReference>
<dbReference type="HOGENOM" id="CLU_033861_0_0_6"/>
<dbReference type="OrthoDB" id="9807458at2"/>
<dbReference type="UniPathway" id="UPA00159">
    <property type="reaction ID" value="UER00275"/>
</dbReference>
<dbReference type="Proteomes" id="UP000000609">
    <property type="component" value="Chromosome"/>
</dbReference>
<dbReference type="GO" id="GO:0005829">
    <property type="term" value="C:cytosol"/>
    <property type="evidence" value="ECO:0007669"/>
    <property type="project" value="TreeGrafter"/>
</dbReference>
<dbReference type="GO" id="GO:0005524">
    <property type="term" value="F:ATP binding"/>
    <property type="evidence" value="ECO:0007669"/>
    <property type="project" value="UniProtKB-KW"/>
</dbReference>
<dbReference type="GO" id="GO:0033862">
    <property type="term" value="F:UMP kinase activity"/>
    <property type="evidence" value="ECO:0007669"/>
    <property type="project" value="UniProtKB-EC"/>
</dbReference>
<dbReference type="GO" id="GO:0044210">
    <property type="term" value="P:'de novo' CTP biosynthetic process"/>
    <property type="evidence" value="ECO:0007669"/>
    <property type="project" value="UniProtKB-UniRule"/>
</dbReference>
<dbReference type="GO" id="GO:0006225">
    <property type="term" value="P:UDP biosynthetic process"/>
    <property type="evidence" value="ECO:0007669"/>
    <property type="project" value="TreeGrafter"/>
</dbReference>
<dbReference type="CDD" id="cd04254">
    <property type="entry name" value="AAK_UMPK-PyrH-Ec"/>
    <property type="match status" value="1"/>
</dbReference>
<dbReference type="FunFam" id="3.40.1160.10:FF:000001">
    <property type="entry name" value="Uridylate kinase"/>
    <property type="match status" value="1"/>
</dbReference>
<dbReference type="Gene3D" id="3.40.1160.10">
    <property type="entry name" value="Acetylglutamate kinase-like"/>
    <property type="match status" value="1"/>
</dbReference>
<dbReference type="HAMAP" id="MF_01220_B">
    <property type="entry name" value="PyrH_B"/>
    <property type="match status" value="1"/>
</dbReference>
<dbReference type="InterPro" id="IPR036393">
    <property type="entry name" value="AceGlu_kinase-like_sf"/>
</dbReference>
<dbReference type="InterPro" id="IPR001048">
    <property type="entry name" value="Asp/Glu/Uridylate_kinase"/>
</dbReference>
<dbReference type="InterPro" id="IPR011817">
    <property type="entry name" value="Uridylate_kinase"/>
</dbReference>
<dbReference type="InterPro" id="IPR015963">
    <property type="entry name" value="Uridylate_kinase_bac"/>
</dbReference>
<dbReference type="NCBIfam" id="TIGR02075">
    <property type="entry name" value="pyrH_bact"/>
    <property type="match status" value="1"/>
</dbReference>
<dbReference type="PANTHER" id="PTHR42833">
    <property type="entry name" value="URIDYLATE KINASE"/>
    <property type="match status" value="1"/>
</dbReference>
<dbReference type="PANTHER" id="PTHR42833:SF4">
    <property type="entry name" value="URIDYLATE KINASE PUMPKIN, CHLOROPLASTIC"/>
    <property type="match status" value="1"/>
</dbReference>
<dbReference type="Pfam" id="PF00696">
    <property type="entry name" value="AA_kinase"/>
    <property type="match status" value="1"/>
</dbReference>
<dbReference type="PIRSF" id="PIRSF005650">
    <property type="entry name" value="Uridylate_kin"/>
    <property type="match status" value="1"/>
</dbReference>
<dbReference type="SUPFAM" id="SSF53633">
    <property type="entry name" value="Carbamate kinase-like"/>
    <property type="match status" value="1"/>
</dbReference>
<keyword id="KW-0067">ATP-binding</keyword>
<keyword id="KW-0963">Cytoplasm</keyword>
<keyword id="KW-0418">Kinase</keyword>
<keyword id="KW-0547">Nucleotide-binding</keyword>
<keyword id="KW-0665">Pyrimidine biosynthesis</keyword>
<keyword id="KW-1185">Reference proteome</keyword>
<keyword id="KW-0808">Transferase</keyword>
<comment type="function">
    <text evidence="1">Catalyzes the reversible phosphorylation of UMP to UDP.</text>
</comment>
<comment type="catalytic activity">
    <reaction evidence="1">
        <text>UMP + ATP = UDP + ADP</text>
        <dbReference type="Rhea" id="RHEA:24400"/>
        <dbReference type="ChEBI" id="CHEBI:30616"/>
        <dbReference type="ChEBI" id="CHEBI:57865"/>
        <dbReference type="ChEBI" id="CHEBI:58223"/>
        <dbReference type="ChEBI" id="CHEBI:456216"/>
        <dbReference type="EC" id="2.7.4.22"/>
    </reaction>
</comment>
<comment type="activity regulation">
    <text evidence="1">Inhibited by UTP.</text>
</comment>
<comment type="pathway">
    <text evidence="1">Pyrimidine metabolism; CTP biosynthesis via de novo pathway; UDP from UMP (UMPK route): step 1/1.</text>
</comment>
<comment type="subunit">
    <text evidence="1">Homohexamer.</text>
</comment>
<comment type="subcellular location">
    <subcellularLocation>
        <location evidence="1">Cytoplasm</location>
    </subcellularLocation>
</comment>
<comment type="similarity">
    <text evidence="1">Belongs to the UMP kinase family.</text>
</comment>
<accession>Q5ZUT0</accession>
<name>PYRH_LEGPH</name>
<gene>
    <name evidence="1" type="primary">pyrH</name>
    <name type="ordered locus">lpg1712</name>
</gene>